<proteinExistence type="evidence at protein level"/>
<feature type="transit peptide" description="Mitochondrion" evidence="1">
    <location>
        <begin position="1"/>
        <end position="26"/>
    </location>
</feature>
<feature type="chain" id="PRO_0000203007" description="Inner membrane assembly complex subunit 22" evidence="1">
    <location>
        <begin position="27"/>
        <end position="216"/>
    </location>
</feature>
<feature type="topological domain" description="Mitochondrial matrix" evidence="6">
    <location>
        <begin position="27"/>
        <end position="43"/>
    </location>
</feature>
<feature type="transmembrane region" description="Helical" evidence="1">
    <location>
        <begin position="44"/>
        <end position="63"/>
    </location>
</feature>
<feature type="topological domain" description="Mitochondrial intermembrane" evidence="6">
    <location>
        <begin position="64"/>
        <end position="216"/>
    </location>
</feature>
<feature type="coiled-coil region" evidence="5">
    <location>
        <begin position="64"/>
        <end position="93"/>
    </location>
</feature>
<accession>P40576</accession>
<accession>D6VVV5</accession>
<sequence>MFMARQVLRNGLFLRSLAPIKITARTVASANAGIKRKSRFDKTMIKPLLLVMIFGSILNAVIAEKRNIIDMERKYKLKLDKLKELIRRVHDNNGKVDFDADDELKLVNLRLGIVGKNATGMKEDETDIVVPKEESLEEIWQSIIDEAKKEVIEKTPDAGVKNKEGIVTDLNVLKDLEKSKKEDEKVYLSGDVHMMMNQPGDLNEIAKEHDKIPKFL</sequence>
<protein>
    <recommendedName>
        <fullName evidence="6">Inner membrane assembly complex subunit 22</fullName>
    </recommendedName>
    <alternativeName>
        <fullName evidence="4">INA complex 22 kDa subunit</fullName>
    </alternativeName>
</protein>
<keyword id="KW-0143">Chaperone</keyword>
<keyword id="KW-0175">Coiled coil</keyword>
<keyword id="KW-0472">Membrane</keyword>
<keyword id="KW-0496">Mitochondrion</keyword>
<keyword id="KW-0999">Mitochondrion inner membrane</keyword>
<keyword id="KW-1185">Reference proteome</keyword>
<keyword id="KW-0809">Transit peptide</keyword>
<keyword id="KW-0812">Transmembrane</keyword>
<keyword id="KW-1133">Transmembrane helix</keyword>
<dbReference type="EMBL" id="Z38061">
    <property type="protein sequence ID" value="CAA86184.1"/>
    <property type="molecule type" value="Genomic_DNA"/>
</dbReference>
<dbReference type="EMBL" id="BK006942">
    <property type="protein sequence ID" value="DAA08571.1"/>
    <property type="molecule type" value="Genomic_DNA"/>
</dbReference>
<dbReference type="PIR" id="S48486">
    <property type="entry name" value="S48486"/>
</dbReference>
<dbReference type="RefSeq" id="NP_012290.1">
    <property type="nucleotide sequence ID" value="NM_001179546.1"/>
</dbReference>
<dbReference type="SMR" id="P40576"/>
<dbReference type="BioGRID" id="35015">
    <property type="interactions" value="99"/>
</dbReference>
<dbReference type="ComplexPortal" id="CPX-3279">
    <property type="entry name" value="INAC inner membrane assembly complex"/>
</dbReference>
<dbReference type="DIP" id="DIP-1203N"/>
<dbReference type="FunCoup" id="P40576">
    <property type="interactions" value="97"/>
</dbReference>
<dbReference type="IntAct" id="P40576">
    <property type="interactions" value="13"/>
</dbReference>
<dbReference type="MINT" id="P40576"/>
<dbReference type="STRING" id="4932.YIR024C"/>
<dbReference type="PaxDb" id="4932-YIR024C"/>
<dbReference type="PeptideAtlas" id="P40576"/>
<dbReference type="EnsemblFungi" id="YIR024C_mRNA">
    <property type="protein sequence ID" value="YIR024C"/>
    <property type="gene ID" value="YIR024C"/>
</dbReference>
<dbReference type="GeneID" id="854842"/>
<dbReference type="KEGG" id="sce:YIR024C"/>
<dbReference type="AGR" id="SGD:S000001463"/>
<dbReference type="SGD" id="S000001463">
    <property type="gene designation" value="INA22"/>
</dbReference>
<dbReference type="VEuPathDB" id="FungiDB:YIR024C"/>
<dbReference type="eggNOG" id="ENOG502S583">
    <property type="taxonomic scope" value="Eukaryota"/>
</dbReference>
<dbReference type="HOGENOM" id="CLU_071870_1_0_1"/>
<dbReference type="InParanoid" id="P40576"/>
<dbReference type="OMA" id="HMMMNQP"/>
<dbReference type="OrthoDB" id="2253354at2759"/>
<dbReference type="BioCyc" id="YEAST:G3O-31443-MONOMER"/>
<dbReference type="BioGRID-ORCS" id="854842">
    <property type="hits" value="0 hits in 10 CRISPR screens"/>
</dbReference>
<dbReference type="PRO" id="PR:P40576"/>
<dbReference type="Proteomes" id="UP000002311">
    <property type="component" value="Chromosome IX"/>
</dbReference>
<dbReference type="RNAct" id="P40576">
    <property type="molecule type" value="protein"/>
</dbReference>
<dbReference type="GO" id="GO:1990524">
    <property type="term" value="C:INA complex"/>
    <property type="evidence" value="ECO:0000314"/>
    <property type="project" value="SGD"/>
</dbReference>
<dbReference type="GO" id="GO:0005743">
    <property type="term" value="C:mitochondrial inner membrane"/>
    <property type="evidence" value="ECO:0000314"/>
    <property type="project" value="ComplexPortal"/>
</dbReference>
<dbReference type="GO" id="GO:1990677">
    <property type="term" value="C:mitochondrial inner membrane assembly complex"/>
    <property type="evidence" value="ECO:0000353"/>
    <property type="project" value="ComplexPortal"/>
</dbReference>
<dbReference type="GO" id="GO:0005739">
    <property type="term" value="C:mitochondrion"/>
    <property type="evidence" value="ECO:0007005"/>
    <property type="project" value="SGD"/>
</dbReference>
<dbReference type="GO" id="GO:0033615">
    <property type="term" value="P:mitochondrial proton-transporting ATP synthase complex assembly"/>
    <property type="evidence" value="ECO:0000314"/>
    <property type="project" value="ComplexPortal"/>
</dbReference>
<name>INA22_YEAST</name>
<organism>
    <name type="scientific">Saccharomyces cerevisiae (strain ATCC 204508 / S288c)</name>
    <name type="common">Baker's yeast</name>
    <dbReference type="NCBI Taxonomy" id="559292"/>
    <lineage>
        <taxon>Eukaryota</taxon>
        <taxon>Fungi</taxon>
        <taxon>Dikarya</taxon>
        <taxon>Ascomycota</taxon>
        <taxon>Saccharomycotina</taxon>
        <taxon>Saccharomycetes</taxon>
        <taxon>Saccharomycetales</taxon>
        <taxon>Saccharomycetaceae</taxon>
        <taxon>Saccharomyces</taxon>
    </lineage>
</organism>
<comment type="function">
    <text evidence="3">Component of the INA complex (INAC) that promotes the biogenesis of mitochondrial F(1)F(0)-ATP synthase. INAC facilitates the assembly of the peripheral stalk and promotes the assembly of the catalytic F(1)-domain with the membrane-embedded F(0)-domain.</text>
</comment>
<comment type="subunit">
    <text evidence="3">Component of the inner membrane assembly (INA) complex, composed of INA17 and INA22. Interacts with a subset of F(1)F(0)-ATP synthase subunits of the F(1)-domain and the peripheral stalk.</text>
</comment>
<comment type="interaction">
    <interactant intactId="EBI-25429">
        <id>P40576</id>
    </interactant>
    <interactant intactId="EBI-7668387">
        <id>Q02888</id>
        <label>INA17</label>
    </interactant>
    <organismsDiffer>false</organismsDiffer>
    <experiments>4</experiments>
</comment>
<comment type="subcellular location">
    <subcellularLocation>
        <location evidence="3">Mitochondrion inner membrane</location>
        <topology evidence="1">Single-pass membrane protein</topology>
    </subcellularLocation>
</comment>
<comment type="miscellaneous">
    <text evidence="2">Present with 589 molecules/cell in log phase SD medium.</text>
</comment>
<reference key="1">
    <citation type="journal article" date="1997" name="Nature">
        <title>The nucleotide sequence of Saccharomyces cerevisiae chromosome IX.</title>
        <authorList>
            <person name="Churcher C.M."/>
            <person name="Bowman S."/>
            <person name="Badcock K."/>
            <person name="Bankier A.T."/>
            <person name="Brown D."/>
            <person name="Chillingworth T."/>
            <person name="Connor R."/>
            <person name="Devlin K."/>
            <person name="Gentles S."/>
            <person name="Hamlin N."/>
            <person name="Harris D.E."/>
            <person name="Horsnell T."/>
            <person name="Hunt S."/>
            <person name="Jagels K."/>
            <person name="Jones M."/>
            <person name="Lye G."/>
            <person name="Moule S."/>
            <person name="Odell C."/>
            <person name="Pearson D."/>
            <person name="Rajandream M.A."/>
            <person name="Rice P."/>
            <person name="Rowley N."/>
            <person name="Skelton J."/>
            <person name="Smith V."/>
            <person name="Walsh S.V."/>
            <person name="Whitehead S."/>
            <person name="Barrell B.G."/>
        </authorList>
    </citation>
    <scope>NUCLEOTIDE SEQUENCE [LARGE SCALE GENOMIC DNA]</scope>
    <source>
        <strain>ATCC 204508 / S288c</strain>
    </source>
</reference>
<reference key="2">
    <citation type="journal article" date="2014" name="G3 (Bethesda)">
        <title>The reference genome sequence of Saccharomyces cerevisiae: Then and now.</title>
        <authorList>
            <person name="Engel S.R."/>
            <person name="Dietrich F.S."/>
            <person name="Fisk D.G."/>
            <person name="Binkley G."/>
            <person name="Balakrishnan R."/>
            <person name="Costanzo M.C."/>
            <person name="Dwight S.S."/>
            <person name="Hitz B.C."/>
            <person name="Karra K."/>
            <person name="Nash R.S."/>
            <person name="Weng S."/>
            <person name="Wong E.D."/>
            <person name="Lloyd P."/>
            <person name="Skrzypek M.S."/>
            <person name="Miyasato S.R."/>
            <person name="Simison M."/>
            <person name="Cherry J.M."/>
        </authorList>
    </citation>
    <scope>GENOME REANNOTATION</scope>
    <source>
        <strain>ATCC 204508 / S288c</strain>
    </source>
</reference>
<reference key="3">
    <citation type="journal article" date="2003" name="Nature">
        <title>Global analysis of protein localization in budding yeast.</title>
        <authorList>
            <person name="Huh W.-K."/>
            <person name="Falvo J.V."/>
            <person name="Gerke L.C."/>
            <person name="Carroll A.S."/>
            <person name="Howson R.W."/>
            <person name="Weissman J.S."/>
            <person name="O'Shea E.K."/>
        </authorList>
    </citation>
    <scope>SUBCELLULAR LOCATION [LARGE SCALE ANALYSIS]</scope>
</reference>
<reference key="4">
    <citation type="journal article" date="2003" name="Nature">
        <title>Global analysis of protein expression in yeast.</title>
        <authorList>
            <person name="Ghaemmaghami S."/>
            <person name="Huh W.-K."/>
            <person name="Bower K."/>
            <person name="Howson R.W."/>
            <person name="Belle A."/>
            <person name="Dephoure N."/>
            <person name="O'Shea E.K."/>
            <person name="Weissman J.S."/>
        </authorList>
    </citation>
    <scope>LEVEL OF PROTEIN EXPRESSION [LARGE SCALE ANALYSIS]</scope>
</reference>
<reference key="5">
    <citation type="journal article" date="2003" name="Proc. Natl. Acad. Sci. U.S.A.">
        <title>The proteome of Saccharomyces cerevisiae mitochondria.</title>
        <authorList>
            <person name="Sickmann A."/>
            <person name="Reinders J."/>
            <person name="Wagner Y."/>
            <person name="Joppich C."/>
            <person name="Zahedi R.P."/>
            <person name="Meyer H.E."/>
            <person name="Schoenfisch B."/>
            <person name="Perschil I."/>
            <person name="Chacinska A."/>
            <person name="Guiard B."/>
            <person name="Rehling P."/>
            <person name="Pfanner N."/>
            <person name="Meisinger C."/>
        </authorList>
    </citation>
    <scope>SUBCELLULAR LOCATION [LARGE SCALE ANALYSIS]</scope>
</reference>
<reference key="6">
    <citation type="journal article" date="2014" name="EMBO J.">
        <title>The INA complex facilitates assembly of the peripheral stalk of the mitochondrial F1Fo-ATP synthase.</title>
        <authorList>
            <person name="Lytovchenko O."/>
            <person name="Naumenko N."/>
            <person name="Oeljeklaus S."/>
            <person name="Schmidt B."/>
            <person name="von der Malsburg K."/>
            <person name="Deckers M."/>
            <person name="Warscheid B."/>
            <person name="van der Laan M."/>
            <person name="Rehling P."/>
        </authorList>
    </citation>
    <scope>FUNCTION</scope>
    <scope>INTERACTION WITH INA17</scope>
    <scope>SUBCELLULAR LOCATION</scope>
    <scope>TOPOLOGY</scope>
</reference>
<evidence type="ECO:0000255" key="1"/>
<evidence type="ECO:0000269" key="2">
    <source>
    </source>
</evidence>
<evidence type="ECO:0000269" key="3">
    <source>
    </source>
</evidence>
<evidence type="ECO:0000303" key="4">
    <source>
    </source>
</evidence>
<evidence type="ECO:0000305" key="5"/>
<evidence type="ECO:0000305" key="6">
    <source>
    </source>
</evidence>
<evidence type="ECO:0000312" key="7">
    <source>
        <dbReference type="SGD" id="S000001463"/>
    </source>
</evidence>
<gene>
    <name evidence="4" type="primary">INA22</name>
    <name evidence="7" type="ordered locus">YIR024C</name>
</gene>